<dbReference type="EMBL" id="D63848">
    <property type="protein sequence ID" value="BAA25596.1"/>
    <property type="molecule type" value="mRNA"/>
</dbReference>
<dbReference type="EMBL" id="D78369">
    <property type="protein sequence ID" value="BAA25597.1"/>
    <property type="status" value="ALT_INIT"/>
    <property type="molecule type" value="mRNA"/>
</dbReference>
<dbReference type="EMBL" id="D82076">
    <property type="protein sequence ID" value="BAA25598.1"/>
    <property type="status" value="ALT_INIT"/>
    <property type="molecule type" value="mRNA"/>
</dbReference>
<dbReference type="EMBL" id="D85750">
    <property type="protein sequence ID" value="BAA25599.1"/>
    <property type="status" value="ALT_INIT"/>
    <property type="molecule type" value="mRNA"/>
</dbReference>
<dbReference type="EMBL" id="D89756">
    <property type="protein sequence ID" value="BAA25628.1"/>
    <property type="status" value="ALT_INIT"/>
    <property type="molecule type" value="mRNA"/>
</dbReference>
<dbReference type="SMR" id="O62837"/>
<dbReference type="GlyCosmos" id="O62837">
    <property type="glycosylation" value="7 sites, No reported glycans"/>
</dbReference>
<dbReference type="GO" id="GO:0009986">
    <property type="term" value="C:cell surface"/>
    <property type="evidence" value="ECO:0007669"/>
    <property type="project" value="InterPro"/>
</dbReference>
<dbReference type="GO" id="GO:0002079">
    <property type="term" value="C:inner acrosomal membrane"/>
    <property type="evidence" value="ECO:0007669"/>
    <property type="project" value="UniProtKB-SubCell"/>
</dbReference>
<dbReference type="GO" id="GO:0006958">
    <property type="term" value="P:complement activation, classical pathway"/>
    <property type="evidence" value="ECO:0007669"/>
    <property type="project" value="UniProtKB-KW"/>
</dbReference>
<dbReference type="GO" id="GO:0045087">
    <property type="term" value="P:innate immune response"/>
    <property type="evidence" value="ECO:0007669"/>
    <property type="project" value="UniProtKB-KW"/>
</dbReference>
<dbReference type="GO" id="GO:0007338">
    <property type="term" value="P:single fertilization"/>
    <property type="evidence" value="ECO:0007669"/>
    <property type="project" value="UniProtKB-KW"/>
</dbReference>
<dbReference type="CDD" id="cd00033">
    <property type="entry name" value="CCP"/>
    <property type="match status" value="4"/>
</dbReference>
<dbReference type="FunFam" id="2.10.70.10:FF:000014">
    <property type="entry name" value="Membrane cofactor protein"/>
    <property type="match status" value="1"/>
</dbReference>
<dbReference type="FunFam" id="2.10.70.10:FF:000042">
    <property type="entry name" value="Membrane cofactor protein"/>
    <property type="match status" value="1"/>
</dbReference>
<dbReference type="Gene3D" id="2.10.70.10">
    <property type="entry name" value="Complement Module, domain 1"/>
    <property type="match status" value="4"/>
</dbReference>
<dbReference type="InterPro" id="IPR017341">
    <property type="entry name" value="CD46"/>
</dbReference>
<dbReference type="InterPro" id="IPR050350">
    <property type="entry name" value="Compl-Cell_Adhes-Reg"/>
</dbReference>
<dbReference type="InterPro" id="IPR035976">
    <property type="entry name" value="Sushi/SCR/CCP_sf"/>
</dbReference>
<dbReference type="InterPro" id="IPR000436">
    <property type="entry name" value="Sushi_SCR_CCP_dom"/>
</dbReference>
<dbReference type="PANTHER" id="PTHR19325">
    <property type="entry name" value="COMPLEMENT COMPONENT-RELATED SUSHI DOMAIN-CONTAINING"/>
    <property type="match status" value="1"/>
</dbReference>
<dbReference type="PANTHER" id="PTHR19325:SF521">
    <property type="entry name" value="MEMBRANE COFACTOR PROTEIN"/>
    <property type="match status" value="1"/>
</dbReference>
<dbReference type="Pfam" id="PF00084">
    <property type="entry name" value="Sushi"/>
    <property type="match status" value="4"/>
</dbReference>
<dbReference type="PIRSF" id="PIRSF037971">
    <property type="entry name" value="TLX_CD46"/>
    <property type="match status" value="1"/>
</dbReference>
<dbReference type="SMART" id="SM00032">
    <property type="entry name" value="CCP"/>
    <property type="match status" value="4"/>
</dbReference>
<dbReference type="SUPFAM" id="SSF57535">
    <property type="entry name" value="Complement control module/SCR domain"/>
    <property type="match status" value="4"/>
</dbReference>
<dbReference type="PROSITE" id="PS50923">
    <property type="entry name" value="SUSHI"/>
    <property type="match status" value="4"/>
</dbReference>
<reference key="1">
    <citation type="journal article" date="1998" name="Biochem. J.">
        <title>Molecular cloning of membrane cofactor protein (MCP; CD46) on B95a cell, an Epstein-Barr virus-transformed marmoset B cell line: B95a-MCP is susceptible to infection by the CAM, but not the Nagahata strain of the measles virus.</title>
        <authorList>
            <person name="Murakami Y."/>
            <person name="Seya T."/>
            <person name="Kurita M."/>
            <person name="Fukui A."/>
            <person name="Ueda S."/>
            <person name="Nagasawa S."/>
        </authorList>
    </citation>
    <scope>NUCLEOTIDE SEQUENCE [MRNA] (ISOFORMS 1; 2; 3 AND 4)</scope>
    <scope>GLYCOSYLATION</scope>
    <scope>FUNCTION</scope>
    <source>
        <tissue>B-cell</tissue>
    </source>
</reference>
<evidence type="ECO:0000250" key="1"/>
<evidence type="ECO:0000250" key="2">
    <source>
        <dbReference type="UniProtKB" id="P15529"/>
    </source>
</evidence>
<evidence type="ECO:0000255" key="3"/>
<evidence type="ECO:0000255" key="4">
    <source>
        <dbReference type="PROSITE-ProRule" id="PRU00302"/>
    </source>
</evidence>
<evidence type="ECO:0000269" key="5">
    <source>
    </source>
</evidence>
<evidence type="ECO:0000303" key="6">
    <source>
    </source>
</evidence>
<evidence type="ECO:0000305" key="7"/>
<sequence>MAPPSRRECPSPSWRFPGLLLAALVLLRSSCSDACGPPPTFEAMELTSRPKPYYKVGERVEYDCKKGYHHFAPFLTHSICDRNHTWLPISDEPCVRKVCHYIPNPLHGEAILANGSYSFGNQLHFICNDGYYLIGKEILYCELKGSDAVWSGRPPICQKILCKPPPKINNGKHTFSDVDVFEYLDAVTYSCDPAPGPDPFSLIGESTIYCRDNSVWSGDAPECKVVKCRFPVIENGKQIAGFGKKFYYKATVIFECDEGFHIIGSDTIVCNSNSTWDPPVPKCVKVSTSPATVSPTSSVPGYPNPDEGMLNSLDEWAIALIVIAILVGVAIISFGLHRYLQRRKKKGKADGTAEYATYQSKSATLAEQRS</sequence>
<keyword id="KW-0025">Alternative splicing</keyword>
<keyword id="KW-0180">Complement pathway</keyword>
<keyword id="KW-0968">Cytoplasmic vesicle</keyword>
<keyword id="KW-1015">Disulfide bond</keyword>
<keyword id="KW-0278">Fertilization</keyword>
<keyword id="KW-0325">Glycoprotein</keyword>
<keyword id="KW-0391">Immunity</keyword>
<keyword id="KW-0399">Innate immunity</keyword>
<keyword id="KW-0472">Membrane</keyword>
<keyword id="KW-0677">Repeat</keyword>
<keyword id="KW-0732">Signal</keyword>
<keyword id="KW-0768">Sushi</keyword>
<keyword id="KW-0812">Transmembrane</keyword>
<keyword id="KW-1133">Transmembrane helix</keyword>
<feature type="signal peptide" evidence="3">
    <location>
        <begin position="1"/>
        <end position="32"/>
    </location>
</feature>
<feature type="chain" id="PRO_0000238976" description="Membrane cofactor protein">
    <location>
        <begin position="33"/>
        <end position="370"/>
    </location>
</feature>
<feature type="topological domain" description="Extracellular" evidence="3">
    <location>
        <begin position="33"/>
        <end position="315"/>
    </location>
</feature>
<feature type="transmembrane region" description="Helical" evidence="3">
    <location>
        <begin position="316"/>
        <end position="336"/>
    </location>
</feature>
<feature type="topological domain" description="Cytoplasmic" evidence="3">
    <location>
        <begin position="337"/>
        <end position="370"/>
    </location>
</feature>
<feature type="domain" description="Sushi 1" evidence="4">
    <location>
        <begin position="33"/>
        <end position="96"/>
    </location>
</feature>
<feature type="domain" description="Sushi 2" evidence="4">
    <location>
        <begin position="97"/>
        <end position="159"/>
    </location>
</feature>
<feature type="domain" description="Sushi 3" evidence="4">
    <location>
        <begin position="160"/>
        <end position="225"/>
    </location>
</feature>
<feature type="domain" description="Sushi 4" evidence="4">
    <location>
        <begin position="226"/>
        <end position="285"/>
    </location>
</feature>
<feature type="glycosylation site" description="N-linked (GlcNAc...) asparagine" evidence="3">
    <location>
        <position position="114"/>
    </location>
</feature>
<feature type="glycosylation site" description="O-linked (GalNAc...) serine" evidence="3">
    <location>
        <position position="287"/>
    </location>
</feature>
<feature type="glycosylation site" description="O-linked (GalNAc...) threonine" evidence="3">
    <location>
        <position position="288"/>
    </location>
</feature>
<feature type="glycosylation site" description="O-linked (GalNAc...) serine" evidence="3">
    <location>
        <position position="289"/>
    </location>
</feature>
<feature type="glycosylation site" description="O-linked (GalNAc...) threonine" evidence="3">
    <location>
        <position position="292"/>
    </location>
</feature>
<feature type="glycosylation site" description="O-linked (GalNAc...) serine" evidence="3">
    <location>
        <position position="294"/>
    </location>
</feature>
<feature type="glycosylation site" description="O-linked (GalNAc...) threonine" evidence="3">
    <location>
        <position position="296"/>
    </location>
</feature>
<feature type="disulfide bond" evidence="4">
    <location>
        <begin position="35"/>
        <end position="80"/>
    </location>
</feature>
<feature type="disulfide bond" evidence="4">
    <location>
        <begin position="64"/>
        <end position="94"/>
    </location>
</feature>
<feature type="disulfide bond" evidence="4">
    <location>
        <begin position="99"/>
        <end position="141"/>
    </location>
</feature>
<feature type="disulfide bond" evidence="4">
    <location>
        <begin position="127"/>
        <end position="157"/>
    </location>
</feature>
<feature type="disulfide bond" evidence="4">
    <location>
        <begin position="162"/>
        <end position="210"/>
    </location>
</feature>
<feature type="disulfide bond" evidence="4">
    <location>
        <begin position="191"/>
        <end position="223"/>
    </location>
</feature>
<feature type="disulfide bond" evidence="4">
    <location>
        <begin position="228"/>
        <end position="270"/>
    </location>
</feature>
<feature type="disulfide bond" evidence="4">
    <location>
        <begin position="256"/>
        <end position="283"/>
    </location>
</feature>
<feature type="splice variant" id="VSP_019043" description="In isoform 2 and isoform 3." evidence="6">
    <original>D</original>
    <variation>G</variation>
    <location>
        <position position="33"/>
    </location>
</feature>
<feature type="splice variant" id="VSP_019044" description="In isoform 2 and isoform 3." evidence="6">
    <location>
        <begin position="34"/>
        <end position="96"/>
    </location>
</feature>
<feature type="splice variant" id="VSP_019045" description="In isoform 3." evidence="6">
    <original>K</original>
    <variation>KELPPSSIKPPTLSHS</variation>
    <location>
        <position position="285"/>
    </location>
</feature>
<feature type="splice variant" id="VSP_019046" description="In isoform 2 and isoform 4." evidence="6">
    <original>VSTSPATVSPTSSV</original>
    <variation>GPRPTYKPPVSRY</variation>
    <location>
        <begin position="286"/>
        <end position="299"/>
    </location>
</feature>
<feature type="splice variant" id="VSP_019047" description="In isoform 3." evidence="6">
    <original>V</original>
    <variation>VPGPRPTYKPPVSRY</variation>
    <location>
        <position position="299"/>
    </location>
</feature>
<feature type="sequence conflict" description="In Ref. 1; BAA25628." evidence="7" ref="1">
    <original>S</original>
    <variation>I</variation>
    <location>
        <position position="312"/>
    </location>
</feature>
<proteinExistence type="evidence at protein level"/>
<organism>
    <name type="scientific">Saguinus oedipus</name>
    <name type="common">Cotton-top tamarin</name>
    <dbReference type="NCBI Taxonomy" id="9490"/>
    <lineage>
        <taxon>Eukaryota</taxon>
        <taxon>Metazoa</taxon>
        <taxon>Chordata</taxon>
        <taxon>Craniata</taxon>
        <taxon>Vertebrata</taxon>
        <taxon>Euteleostomi</taxon>
        <taxon>Mammalia</taxon>
        <taxon>Eutheria</taxon>
        <taxon>Euarchontoglires</taxon>
        <taxon>Primates</taxon>
        <taxon>Haplorrhini</taxon>
        <taxon>Platyrrhini</taxon>
        <taxon>Cebidae</taxon>
        <taxon>Callitrichinae</taxon>
        <taxon>Saguinus</taxon>
    </lineage>
</organism>
<accession>O62837</accession>
<accession>O62834</accession>
<accession>O62835</accession>
<accession>O62838</accession>
<accession>Q9TSH6</accession>
<name>MCP_SAGOE</name>
<gene>
    <name type="primary">CD46</name>
    <name type="synonym">MCP</name>
</gene>
<comment type="function">
    <text evidence="5">Acts as a cofactor for complement factor I, a serine protease which protects autologous cells against complement-mediated injury by cleaving C3b and C4b deposited on host tissue. May be involved in the fusion of the spermatozoa with the oocyte during fertilization. Also acts as a costimulatory factor for T-cells which induces the differentiation of CD4+ into T-regulatory 1 cells. T-regulatory 1 cells suppress immune responses by secreting interleukin-10, and therefore are thought to prevent autoimmunity.</text>
</comment>
<comment type="subunit">
    <text evidence="2">Interacts with C3b. Interacts with C4b. Interacts with moesin/MSN.</text>
</comment>
<comment type="subcellular location">
    <subcellularLocation>
        <location evidence="1">Cytoplasmic vesicle</location>
        <location evidence="1">Secretory vesicle</location>
        <location evidence="1">Acrosome inner membrane</location>
        <topology evidence="1">Single-pass type I membrane protein</topology>
    </subcellularLocation>
    <text evidence="1">Inner acrosomal membrane of spermatozoa.</text>
</comment>
<comment type="alternative products">
    <event type="alternative splicing"/>
    <isoform>
        <id>O62837-1</id>
        <name>1</name>
        <sequence type="displayed"/>
    </isoform>
    <isoform>
        <id>O62837-2</id>
        <name>2</name>
        <sequence type="described" ref="VSP_019043 VSP_019044 VSP_019046"/>
    </isoform>
    <isoform>
        <id>O62837-3</id>
        <name>3</name>
        <sequence type="described" ref="VSP_019043 VSP_019044 VSP_019045 VSP_019047"/>
    </isoform>
    <isoform>
        <id>O62837-4</id>
        <name>4</name>
        <sequence type="described" ref="VSP_019046"/>
    </isoform>
    <text>Additional isoforms seem to exist.</text>
</comment>
<comment type="domain">
    <text evidence="1">Sushi domains 3 and 4 are the most important for interaction with C3b and C4b.</text>
</comment>
<comment type="PTM">
    <text evidence="5">O-glycosylated.</text>
</comment>
<comment type="sequence caution" evidence="7">
    <conflict type="erroneous initiation">
        <sequence resource="EMBL-CDS" id="BAA25597"/>
    </conflict>
</comment>
<comment type="sequence caution" evidence="7">
    <conflict type="erroneous initiation">
        <sequence resource="EMBL-CDS" id="BAA25598"/>
    </conflict>
</comment>
<comment type="sequence caution" evidence="7">
    <conflict type="erroneous initiation">
        <sequence resource="EMBL-CDS" id="BAA25599"/>
    </conflict>
</comment>
<comment type="sequence caution" evidence="7">
    <conflict type="erroneous initiation">
        <sequence resource="EMBL-CDS" id="BAA25628"/>
    </conflict>
</comment>
<protein>
    <recommendedName>
        <fullName>Membrane cofactor protein</fullName>
    </recommendedName>
    <cdAntigenName>CD46</cdAntigenName>
</protein>